<keyword id="KW-0106">Calcium</keyword>
<keyword id="KW-1003">Cell membrane</keyword>
<keyword id="KW-0186">Copper</keyword>
<keyword id="KW-0255">Endonuclease</keyword>
<keyword id="KW-0378">Hydrolase</keyword>
<keyword id="KW-0449">Lipoprotein</keyword>
<keyword id="KW-0464">Manganese</keyword>
<keyword id="KW-0472">Membrane</keyword>
<keyword id="KW-0479">Metal-binding</keyword>
<keyword id="KW-0540">Nuclease</keyword>
<keyword id="KW-0564">Palmitate</keyword>
<keyword id="KW-1185">Reference proteome</keyword>
<keyword id="KW-0732">Signal</keyword>
<proteinExistence type="evidence at protein level"/>
<accession>O32001</accession>
<name>YOKF_BACSU</name>
<organism>
    <name type="scientific">Bacillus subtilis (strain 168)</name>
    <dbReference type="NCBI Taxonomy" id="224308"/>
    <lineage>
        <taxon>Bacteria</taxon>
        <taxon>Bacillati</taxon>
        <taxon>Bacillota</taxon>
        <taxon>Bacilli</taxon>
        <taxon>Bacillales</taxon>
        <taxon>Bacillaceae</taxon>
        <taxon>Bacillus</taxon>
    </lineage>
</organism>
<dbReference type="EC" id="3.1.-.-"/>
<dbReference type="EMBL" id="AL009126">
    <property type="protein sequence ID" value="CAB14079.1"/>
    <property type="molecule type" value="Genomic_DNA"/>
</dbReference>
<dbReference type="RefSeq" id="WP_004399048.1">
    <property type="nucleotide sequence ID" value="NZ_OZ025638.1"/>
</dbReference>
<dbReference type="SMR" id="O32001"/>
<dbReference type="FunCoup" id="O32001">
    <property type="interactions" value="23"/>
</dbReference>
<dbReference type="STRING" id="224308.BSU21610"/>
<dbReference type="PaxDb" id="224308-BSU21610"/>
<dbReference type="EnsemblBacteria" id="CAB14079">
    <property type="protein sequence ID" value="CAB14079"/>
    <property type="gene ID" value="BSU_21610"/>
</dbReference>
<dbReference type="GeneID" id="939113"/>
<dbReference type="KEGG" id="bsu:BSU21610"/>
<dbReference type="PATRIC" id="fig|224308.179.peg.2360"/>
<dbReference type="eggNOG" id="COG1525">
    <property type="taxonomic scope" value="Bacteria"/>
</dbReference>
<dbReference type="InParanoid" id="O32001"/>
<dbReference type="OrthoDB" id="4376109at2"/>
<dbReference type="BioCyc" id="BSUB:BSU21610-MONOMER"/>
<dbReference type="Proteomes" id="UP000001570">
    <property type="component" value="Chromosome"/>
</dbReference>
<dbReference type="GO" id="GO:0005886">
    <property type="term" value="C:plasma membrane"/>
    <property type="evidence" value="ECO:0007669"/>
    <property type="project" value="UniProtKB-SubCell"/>
</dbReference>
<dbReference type="GO" id="GO:0004519">
    <property type="term" value="F:endonuclease activity"/>
    <property type="evidence" value="ECO:0007669"/>
    <property type="project" value="UniProtKB-KW"/>
</dbReference>
<dbReference type="GO" id="GO:0046872">
    <property type="term" value="F:metal ion binding"/>
    <property type="evidence" value="ECO:0007669"/>
    <property type="project" value="UniProtKB-KW"/>
</dbReference>
<dbReference type="GO" id="GO:0004518">
    <property type="term" value="F:nuclease activity"/>
    <property type="evidence" value="ECO:0000315"/>
    <property type="project" value="CACAO"/>
</dbReference>
<dbReference type="GO" id="GO:0003676">
    <property type="term" value="F:nucleic acid binding"/>
    <property type="evidence" value="ECO:0007669"/>
    <property type="project" value="InterPro"/>
</dbReference>
<dbReference type="CDD" id="cd00175">
    <property type="entry name" value="SNc"/>
    <property type="match status" value="1"/>
</dbReference>
<dbReference type="FunFam" id="2.40.50.90:FF:000025">
    <property type="entry name" value="Thermonuclease"/>
    <property type="match status" value="1"/>
</dbReference>
<dbReference type="Gene3D" id="2.40.50.90">
    <property type="match status" value="1"/>
</dbReference>
<dbReference type="InterPro" id="IPR008613">
    <property type="entry name" value="Excalibur_Ca-bd_domain"/>
</dbReference>
<dbReference type="InterPro" id="IPR035437">
    <property type="entry name" value="SNase_OB-fold_sf"/>
</dbReference>
<dbReference type="InterPro" id="IPR016071">
    <property type="entry name" value="Staphylococal_nuclease_OB-fold"/>
</dbReference>
<dbReference type="InterPro" id="IPR002071">
    <property type="entry name" value="Thermonucl_AS"/>
</dbReference>
<dbReference type="PANTHER" id="PTHR12302">
    <property type="entry name" value="EBNA2 BINDING PROTEIN P100"/>
    <property type="match status" value="1"/>
</dbReference>
<dbReference type="PANTHER" id="PTHR12302:SF3">
    <property type="entry name" value="SERINE_THREONINE-PROTEIN KINASE 31"/>
    <property type="match status" value="1"/>
</dbReference>
<dbReference type="Pfam" id="PF05901">
    <property type="entry name" value="Excalibur"/>
    <property type="match status" value="1"/>
</dbReference>
<dbReference type="Pfam" id="PF00565">
    <property type="entry name" value="SNase"/>
    <property type="match status" value="1"/>
</dbReference>
<dbReference type="SMART" id="SM00894">
    <property type="entry name" value="Excalibur"/>
    <property type="match status" value="1"/>
</dbReference>
<dbReference type="SMART" id="SM00318">
    <property type="entry name" value="SNc"/>
    <property type="match status" value="1"/>
</dbReference>
<dbReference type="SUPFAM" id="SSF50199">
    <property type="entry name" value="Staphylococcal nuclease"/>
    <property type="match status" value="1"/>
</dbReference>
<dbReference type="PROSITE" id="PS51257">
    <property type="entry name" value="PROKAR_LIPOPROTEIN"/>
    <property type="match status" value="1"/>
</dbReference>
<dbReference type="PROSITE" id="PS01284">
    <property type="entry name" value="TNASE_2"/>
    <property type="match status" value="1"/>
</dbReference>
<dbReference type="PROSITE" id="PS50830">
    <property type="entry name" value="TNASE_3"/>
    <property type="match status" value="1"/>
</dbReference>
<sequence>MKKVLLGFAAFTLSLSLAACSSNDSEKVSTEKETPQASTDVEKKTEQKESTKEKTADKSKEKDKKELVDVTLDRAVDGDTIKVTYNGNVDTVRYLLIDTPETKKPNSCVQPYGEDASKRNKELVNSGKLQLEFDKGDRRDKYGRLLAYVYVDGKSVQETLLKEGLARVAYVYEPNTKYIDQFKKDEQEAKSEKLSIWSKNGYVTDRGFNGCVKEKTTAVKKATTSKPAATQPTTPKASSETSTTTEKEASSETTGGTETFKNCTELRKKYPNGVPSSHPAYQSKMDRDHDNYACER</sequence>
<gene>
    <name type="primary">yokF</name>
    <name type="ordered locus">BSU21610</name>
</gene>
<comment type="function">
    <text evidence="5">Catalyzes the hydrolysis of supercoiled double and single strand DNA and RNA. Involved in chromosomal DNA degradation and cell death caused by thermal stress.</text>
</comment>
<comment type="cofactor">
    <cofactor evidence="5">
        <name>Ca(2+)</name>
        <dbReference type="ChEBI" id="CHEBI:29108"/>
    </cofactor>
    <cofactor evidence="5">
        <name>Cu(2+)</name>
        <dbReference type="ChEBI" id="CHEBI:29036"/>
    </cofactor>
    <cofactor evidence="5">
        <name>Mn(2+)</name>
        <dbReference type="ChEBI" id="CHEBI:29035"/>
    </cofactor>
    <text evidence="5">Binds 1 Ca(2+) ion per subunit. Can also use Co(2+) or Mn(2+).</text>
</comment>
<comment type="activity regulation">
    <text evidence="5">Inhibited by aurintricalboxylic acid but not by Zn(2+), Mn(2+), Hg(2+), 2-mercaptoethanol and sodium citrate. Neither inhibited nor activated by ATP.</text>
</comment>
<comment type="biophysicochemical properties">
    <phDependence>
        <text evidence="5">Optimum pH is 7.0-8.0.</text>
    </phDependence>
    <temperatureDependence>
        <text evidence="5">Optimum temperature is 40-45 degrees Celsius.</text>
    </temperatureDependence>
</comment>
<comment type="subcellular location">
    <subcellularLocation>
        <location evidence="3">Cell membrane</location>
        <topology evidence="3">Lipid-anchor</topology>
    </subcellularLocation>
</comment>
<comment type="disruption phenotype">
    <text evidence="5">Cells lacking this gene are more sensitive to mitomycin C, show an increased ability of competence and are not able to metabolize extracellular DNA.</text>
</comment>
<reference key="1">
    <citation type="journal article" date="1997" name="Nature">
        <title>The complete genome sequence of the Gram-positive bacterium Bacillus subtilis.</title>
        <authorList>
            <person name="Kunst F."/>
            <person name="Ogasawara N."/>
            <person name="Moszer I."/>
            <person name="Albertini A.M."/>
            <person name="Alloni G."/>
            <person name="Azevedo V."/>
            <person name="Bertero M.G."/>
            <person name="Bessieres P."/>
            <person name="Bolotin A."/>
            <person name="Borchert S."/>
            <person name="Borriss R."/>
            <person name="Boursier L."/>
            <person name="Brans A."/>
            <person name="Braun M."/>
            <person name="Brignell S.C."/>
            <person name="Bron S."/>
            <person name="Brouillet S."/>
            <person name="Bruschi C.V."/>
            <person name="Caldwell B."/>
            <person name="Capuano V."/>
            <person name="Carter N.M."/>
            <person name="Choi S.-K."/>
            <person name="Codani J.-J."/>
            <person name="Connerton I.F."/>
            <person name="Cummings N.J."/>
            <person name="Daniel R.A."/>
            <person name="Denizot F."/>
            <person name="Devine K.M."/>
            <person name="Duesterhoeft A."/>
            <person name="Ehrlich S.D."/>
            <person name="Emmerson P.T."/>
            <person name="Entian K.-D."/>
            <person name="Errington J."/>
            <person name="Fabret C."/>
            <person name="Ferrari E."/>
            <person name="Foulger D."/>
            <person name="Fritz C."/>
            <person name="Fujita M."/>
            <person name="Fujita Y."/>
            <person name="Fuma S."/>
            <person name="Galizzi A."/>
            <person name="Galleron N."/>
            <person name="Ghim S.-Y."/>
            <person name="Glaser P."/>
            <person name="Goffeau A."/>
            <person name="Golightly E.J."/>
            <person name="Grandi G."/>
            <person name="Guiseppi G."/>
            <person name="Guy B.J."/>
            <person name="Haga K."/>
            <person name="Haiech J."/>
            <person name="Harwood C.R."/>
            <person name="Henaut A."/>
            <person name="Hilbert H."/>
            <person name="Holsappel S."/>
            <person name="Hosono S."/>
            <person name="Hullo M.-F."/>
            <person name="Itaya M."/>
            <person name="Jones L.-M."/>
            <person name="Joris B."/>
            <person name="Karamata D."/>
            <person name="Kasahara Y."/>
            <person name="Klaerr-Blanchard M."/>
            <person name="Klein C."/>
            <person name="Kobayashi Y."/>
            <person name="Koetter P."/>
            <person name="Koningstein G."/>
            <person name="Krogh S."/>
            <person name="Kumano M."/>
            <person name="Kurita K."/>
            <person name="Lapidus A."/>
            <person name="Lardinois S."/>
            <person name="Lauber J."/>
            <person name="Lazarevic V."/>
            <person name="Lee S.-M."/>
            <person name="Levine A."/>
            <person name="Liu H."/>
            <person name="Masuda S."/>
            <person name="Mauel C."/>
            <person name="Medigue C."/>
            <person name="Medina N."/>
            <person name="Mellado R.P."/>
            <person name="Mizuno M."/>
            <person name="Moestl D."/>
            <person name="Nakai S."/>
            <person name="Noback M."/>
            <person name="Noone D."/>
            <person name="O'Reilly M."/>
            <person name="Ogawa K."/>
            <person name="Ogiwara A."/>
            <person name="Oudega B."/>
            <person name="Park S.-H."/>
            <person name="Parro V."/>
            <person name="Pohl T.M."/>
            <person name="Portetelle D."/>
            <person name="Porwollik S."/>
            <person name="Prescott A.M."/>
            <person name="Presecan E."/>
            <person name="Pujic P."/>
            <person name="Purnelle B."/>
            <person name="Rapoport G."/>
            <person name="Rey M."/>
            <person name="Reynolds S."/>
            <person name="Rieger M."/>
            <person name="Rivolta C."/>
            <person name="Rocha E."/>
            <person name="Roche B."/>
            <person name="Rose M."/>
            <person name="Sadaie Y."/>
            <person name="Sato T."/>
            <person name="Scanlan E."/>
            <person name="Schleich S."/>
            <person name="Schroeter R."/>
            <person name="Scoffone F."/>
            <person name="Sekiguchi J."/>
            <person name="Sekowska A."/>
            <person name="Seror S.J."/>
            <person name="Serror P."/>
            <person name="Shin B.-S."/>
            <person name="Soldo B."/>
            <person name="Sorokin A."/>
            <person name="Tacconi E."/>
            <person name="Takagi T."/>
            <person name="Takahashi H."/>
            <person name="Takemaru K."/>
            <person name="Takeuchi M."/>
            <person name="Tamakoshi A."/>
            <person name="Tanaka T."/>
            <person name="Terpstra P."/>
            <person name="Tognoni A."/>
            <person name="Tosato V."/>
            <person name="Uchiyama S."/>
            <person name="Vandenbol M."/>
            <person name="Vannier F."/>
            <person name="Vassarotti A."/>
            <person name="Viari A."/>
            <person name="Wambutt R."/>
            <person name="Wedler E."/>
            <person name="Wedler H."/>
            <person name="Weitzenegger T."/>
            <person name="Winters P."/>
            <person name="Wipat A."/>
            <person name="Yamamoto H."/>
            <person name="Yamane K."/>
            <person name="Yasumoto K."/>
            <person name="Yata K."/>
            <person name="Yoshida K."/>
            <person name="Yoshikawa H.-F."/>
            <person name="Zumstein E."/>
            <person name="Yoshikawa H."/>
            <person name="Danchin A."/>
        </authorList>
    </citation>
    <scope>NUCLEOTIDE SEQUENCE [LARGE SCALE GENOMIC DNA]</scope>
    <source>
        <strain>168</strain>
    </source>
</reference>
<reference key="2">
    <citation type="journal article" date="2001" name="J. Biol. Chem.">
        <title>Purification and characterization of a Bacillus subtilis 168 nuclease, YokF, involved in chromosomal DNA degradation and cell death caused by thermal shock treatments.</title>
        <authorList>
            <person name="Sakamoto J.J."/>
            <person name="Sasaki M."/>
            <person name="Tsuchido T."/>
        </authorList>
    </citation>
    <scope>FUNCTION</scope>
    <scope>DNASE ACTIVITY</scope>
    <scope>COFACTOR</scope>
    <scope>ACTIVITY REGULATION</scope>
    <scope>BIOPHYSICOCHEMICAL PROPERTIES</scope>
    <scope>DISRUPTION PHENOTYPE</scope>
    <source>
        <strain>168</strain>
    </source>
</reference>
<feature type="signal peptide" evidence="3">
    <location>
        <begin position="1"/>
        <end position="19"/>
    </location>
</feature>
<feature type="chain" id="PRO_0000375918" description="SPbeta prophage-derived endonuclease YokF">
    <location>
        <begin position="20"/>
        <end position="296"/>
    </location>
</feature>
<feature type="domain" description="TNase-like" evidence="2">
    <location>
        <begin position="66"/>
        <end position="199"/>
    </location>
</feature>
<feature type="region of interest" description="Disordered" evidence="4">
    <location>
        <begin position="20"/>
        <end position="65"/>
    </location>
</feature>
<feature type="region of interest" description="Disordered" evidence="4">
    <location>
        <begin position="218"/>
        <end position="296"/>
    </location>
</feature>
<feature type="compositionally biased region" description="Basic and acidic residues" evidence="4">
    <location>
        <begin position="24"/>
        <end position="65"/>
    </location>
</feature>
<feature type="compositionally biased region" description="Low complexity" evidence="4">
    <location>
        <begin position="219"/>
        <end position="244"/>
    </location>
</feature>
<feature type="compositionally biased region" description="Basic and acidic residues" evidence="4">
    <location>
        <begin position="284"/>
        <end position="296"/>
    </location>
</feature>
<feature type="active site" evidence="1">
    <location>
        <position position="93"/>
    </location>
</feature>
<feature type="active site" evidence="1">
    <location>
        <position position="101"/>
    </location>
</feature>
<feature type="active site" evidence="1">
    <location>
        <position position="144"/>
    </location>
</feature>
<feature type="binding site" evidence="2">
    <location>
        <position position="79"/>
    </location>
    <ligand>
        <name>Ca(2+)</name>
        <dbReference type="ChEBI" id="CHEBI:29108"/>
    </ligand>
</feature>
<feature type="binding site" evidence="2">
    <location>
        <position position="98"/>
    </location>
    <ligand>
        <name>Ca(2+)</name>
        <dbReference type="ChEBI" id="CHEBI:29108"/>
    </ligand>
</feature>
<feature type="binding site" evidence="2">
    <location>
        <position position="99"/>
    </location>
    <ligand>
        <name>Ca(2+)</name>
        <dbReference type="ChEBI" id="CHEBI:29108"/>
    </ligand>
</feature>
<feature type="lipid moiety-binding region" description="N-palmitoyl cysteine" evidence="3">
    <location>
        <position position="20"/>
    </location>
</feature>
<feature type="lipid moiety-binding region" description="S-diacylglycerol cysteine" evidence="3">
    <location>
        <position position="20"/>
    </location>
</feature>
<protein>
    <recommendedName>
        <fullName>SPbeta prophage-derived endonuclease YokF</fullName>
        <ecNumber>3.1.-.-</ecNumber>
    </recommendedName>
</protein>
<evidence type="ECO:0000250" key="1"/>
<evidence type="ECO:0000255" key="2">
    <source>
        <dbReference type="PROSITE-ProRule" id="PRU00272"/>
    </source>
</evidence>
<evidence type="ECO:0000255" key="3">
    <source>
        <dbReference type="PROSITE-ProRule" id="PRU00303"/>
    </source>
</evidence>
<evidence type="ECO:0000256" key="4">
    <source>
        <dbReference type="SAM" id="MobiDB-lite"/>
    </source>
</evidence>
<evidence type="ECO:0000269" key="5">
    <source>
    </source>
</evidence>